<proteinExistence type="predicted"/>
<evidence type="ECO:0000255" key="1"/>
<evidence type="ECO:0000256" key="2">
    <source>
        <dbReference type="SAM" id="MobiDB-lite"/>
    </source>
</evidence>
<evidence type="ECO:0000305" key="3"/>
<accession>P55505</accession>
<feature type="chain" id="PRO_0000200871" description="Uncharacterized protein y4jE">
    <location>
        <begin position="1"/>
        <end position="273"/>
    </location>
</feature>
<feature type="transmembrane region" description="Helical" evidence="1">
    <location>
        <begin position="24"/>
        <end position="44"/>
    </location>
</feature>
<feature type="transmembrane region" description="Helical" evidence="1">
    <location>
        <begin position="103"/>
        <end position="123"/>
    </location>
</feature>
<feature type="region of interest" description="Disordered" evidence="2">
    <location>
        <begin position="132"/>
        <end position="194"/>
    </location>
</feature>
<feature type="compositionally biased region" description="Basic residues" evidence="2">
    <location>
        <begin position="164"/>
        <end position="179"/>
    </location>
</feature>
<feature type="compositionally biased region" description="Low complexity" evidence="2">
    <location>
        <begin position="183"/>
        <end position="192"/>
    </location>
</feature>
<sequence>MTRPAVSYDELDEYLRGDGHNDYVGVSAIDGLIAAVVAGPVTILPDIWLPHVFGGSMPQARPGSIEERLVNTVLNRHDEVESLLRDAPGHYYPIFMNHKGKTIVGPWAIGFSLGLSLGGEAWAPIAGNAKASDLPHHGRQSAAGQTAHPAFSSGAAEIESNRSSSHHIRSPAVARHHKTGPITTQPPAQTQPYRKTACSLRLQCTRSVEHDTQARGGPCIPGVSGLKLGLRPADRWSGCRWEHVVAYLGSPLYESTSTCAEGADRQLLVLRED</sequence>
<organism>
    <name type="scientific">Sinorhizobium fredii (strain NBRC 101917 / NGR234)</name>
    <dbReference type="NCBI Taxonomy" id="394"/>
    <lineage>
        <taxon>Bacteria</taxon>
        <taxon>Pseudomonadati</taxon>
        <taxon>Pseudomonadota</taxon>
        <taxon>Alphaproteobacteria</taxon>
        <taxon>Hyphomicrobiales</taxon>
        <taxon>Rhizobiaceae</taxon>
        <taxon>Sinorhizobium/Ensifer group</taxon>
        <taxon>Sinorhizobium</taxon>
    </lineage>
</organism>
<protein>
    <recommendedName>
        <fullName>Uncharacterized protein y4jE</fullName>
    </recommendedName>
</protein>
<gene>
    <name type="ordered locus">NGR_a03110</name>
    <name type="ORF">y4jE</name>
</gene>
<name>Y4JE_SINFN</name>
<geneLocation type="plasmid">
    <name>sym pNGR234a</name>
</geneLocation>
<keyword id="KW-1003">Cell membrane</keyword>
<keyword id="KW-0472">Membrane</keyword>
<keyword id="KW-0614">Plasmid</keyword>
<keyword id="KW-1185">Reference proteome</keyword>
<keyword id="KW-0812">Transmembrane</keyword>
<keyword id="KW-1133">Transmembrane helix</keyword>
<reference key="1">
    <citation type="journal article" date="1997" name="Nature">
        <title>Molecular basis of symbiosis between Rhizobium and legumes.</title>
        <authorList>
            <person name="Freiberg C.A."/>
            <person name="Fellay R."/>
            <person name="Bairoch A."/>
            <person name="Broughton W.J."/>
            <person name="Rosenthal A."/>
            <person name="Perret X."/>
        </authorList>
    </citation>
    <scope>NUCLEOTIDE SEQUENCE [LARGE SCALE GENOMIC DNA]</scope>
    <source>
        <strain>NBRC 101917 / NGR234</strain>
    </source>
</reference>
<reference key="2">
    <citation type="journal article" date="2009" name="Appl. Environ. Microbiol.">
        <title>Rhizobium sp. strain NGR234 possesses a remarkable number of secretion systems.</title>
        <authorList>
            <person name="Schmeisser C."/>
            <person name="Liesegang H."/>
            <person name="Krysciak D."/>
            <person name="Bakkou N."/>
            <person name="Le Quere A."/>
            <person name="Wollherr A."/>
            <person name="Heinemeyer I."/>
            <person name="Morgenstern B."/>
            <person name="Pommerening-Roeser A."/>
            <person name="Flores M."/>
            <person name="Palacios R."/>
            <person name="Brenner S."/>
            <person name="Gottschalk G."/>
            <person name="Schmitz R.A."/>
            <person name="Broughton W.J."/>
            <person name="Perret X."/>
            <person name="Strittmatter A.W."/>
            <person name="Streit W.R."/>
        </authorList>
    </citation>
    <scope>NUCLEOTIDE SEQUENCE [LARGE SCALE GENOMIC DNA]</scope>
    <source>
        <strain>NBRC 101917 / NGR234</strain>
    </source>
</reference>
<dbReference type="EMBL" id="U00090">
    <property type="protein sequence ID" value="AAB91717.1"/>
    <property type="molecule type" value="Genomic_DNA"/>
</dbReference>
<dbReference type="RefSeq" id="NP_443915.1">
    <property type="nucleotide sequence ID" value="NC_000914.2"/>
</dbReference>
<dbReference type="RefSeq" id="WP_010875331.1">
    <property type="nucleotide sequence ID" value="NC_000914.2"/>
</dbReference>
<dbReference type="KEGG" id="rhi:NGR_a03110"/>
<dbReference type="eggNOG" id="COG3318">
    <property type="taxonomic scope" value="Bacteria"/>
</dbReference>
<dbReference type="HOGENOM" id="CLU_1018931_0_0_5"/>
<dbReference type="OrthoDB" id="8363121at2"/>
<dbReference type="Proteomes" id="UP000001054">
    <property type="component" value="Plasmid pNGR234a"/>
</dbReference>
<dbReference type="GO" id="GO:0005886">
    <property type="term" value="C:plasma membrane"/>
    <property type="evidence" value="ECO:0007669"/>
    <property type="project" value="UniProtKB-SubCell"/>
</dbReference>
<dbReference type="InterPro" id="IPR011978">
    <property type="entry name" value="YgfB-like"/>
</dbReference>
<dbReference type="InterPro" id="IPR036255">
    <property type="entry name" value="YgfB-like_sf"/>
</dbReference>
<dbReference type="NCBIfam" id="TIGR02292">
    <property type="entry name" value="ygfB_yecA"/>
    <property type="match status" value="1"/>
</dbReference>
<dbReference type="Pfam" id="PF03695">
    <property type="entry name" value="UPF0149"/>
    <property type="match status" value="1"/>
</dbReference>
<dbReference type="SUPFAM" id="SSF101327">
    <property type="entry name" value="YgfB-like"/>
    <property type="match status" value="1"/>
</dbReference>
<comment type="subcellular location">
    <subcellularLocation>
        <location evidence="3">Cell membrane</location>
        <topology evidence="3">Multi-pass membrane protein</topology>
    </subcellularLocation>
</comment>